<keyword id="KW-0240">DNA-directed RNA polymerase</keyword>
<keyword id="KW-0548">Nucleotidyltransferase</keyword>
<keyword id="KW-0804">Transcription</keyword>
<keyword id="KW-0808">Transferase</keyword>
<accession>Q31IY9</accession>
<sequence length="1352" mass="150208">MTYSLTEKKRIRKDFATRSSILEVPYLLSLQKESFKEFLQKDKKPLERDPIGLHSAFSSVFPIHGVAGTADLEYVSYTMGQPEFDVKECKQRGVTYSSPLRVKMRLVLFDKDAPAGKRPVKDVKEQEVYLGDVPLMTENGTFVINGTERVIVTQLHRSPGVIFDSDKGKSHSSGKVLFNARIIPYRGSWLDFEFDHNDCVFVRIDRRRKLPVSIIFRAMGYSSEEILDTFFDHTHISYKKGAFVMQLVPSQLKGQTAAFDIADGDKVIIKAGKKITARNIKQLQEAKVDSVVVPEEYLLGKVLSSGITNEETGELVARSNEVIASDLIETMKSIKDLSFRILFIDDLENGSYISDTLNLDTTTSQLEAQIEIYRMMRPGEPPTKESSEALFNSLFFDEARYDLSSVGRMKLNRRLGRKDNEGSLVLENQDVVDVVKELLNIRNGLSTIDDIDTLGNRRIRAVGEMAENAFRVGLVRVERAVKERLNQAETDGLLPQDLINAKPVSAAIKEFFGSSQLSQFMDQVNPLSEVTHKRRVSALGPGGLTRERAGFEVRDVHPTHYGRVCPIETPEGPNIGLINTLAIYAKTNKYGFLETPYRKVIDGQVTEEVEYVSAIDEAQFVIAQASAAMDSDNKLLDELVTARHKNETILASSQDIDYMDVSPKQIVSVAASLIPFLEHDDANRALMGSNMQRQAVPTLRADKPLVGTGIEKTVAIDSGVTVIALRGGEIVSSDSARIVVRANQEEIAEGETGVDIYNLIKYQRSNQNTCINQKPIVKAGDVVSRGDVLADGPSTDLGELAIGQNMRIAFMPWNGYNFEDSILVSERVVQEDRYTTIHIEELTCLARDTKLGPEEVTSDIPNVGEAALSRLDESGIVYVGAEVKQGDILVGKVTPKGETQLTPEEKLLRAIFGEKASDVKDTSLRVSKGVEGTVIDVQVFTREGVKKDARALAIQEDELQKVRKDIDEQYKILEEDTIDRIQPMLIGQKLVDGTEITADFLASQDSSKWFGLNVADDALSSHLESLEKQLVAKKEELNGVFEEKKKKLTQGDDLQPGVSKMVKVYVAVKRRIQPGDKMAGRHGNKGVISRICPVEDMPYDETGRPVDICLNPLGVPSRMNVGQILETHLGLAAEGLGAKINAMLEQQADIKELKSFLHKIYNETQGQKVDFDSLTDAEIIELAGNLRKGVPMASPVFDGASEDEIKALLRLADLPESGQMKLYDGISGEEFDRPVTVGYMYYLKLNHLVDDKMHARSTGPYSLVTQQPLGGKAQFGGQRFGEMEVWALEAYGAAFTLQEMLTVKSDDLNGRTRMYKNIVDGNEYMEPGIPESFSVLRKEIRALGIDIELEQE</sequence>
<protein>
    <recommendedName>
        <fullName evidence="1">DNA-directed RNA polymerase subunit beta</fullName>
        <shortName evidence="1">RNAP subunit beta</shortName>
        <ecNumber evidence="1">2.7.7.6</ecNumber>
    </recommendedName>
    <alternativeName>
        <fullName evidence="1">RNA polymerase subunit beta</fullName>
    </alternativeName>
    <alternativeName>
        <fullName evidence="1">Transcriptase subunit beta</fullName>
    </alternativeName>
</protein>
<gene>
    <name evidence="1" type="primary">rpoB</name>
    <name type="ordered locus">Tcr_0288</name>
</gene>
<dbReference type="EC" id="2.7.7.6" evidence="1"/>
<dbReference type="EMBL" id="CP000109">
    <property type="protein sequence ID" value="ABB40884.1"/>
    <property type="molecule type" value="Genomic_DNA"/>
</dbReference>
<dbReference type="SMR" id="Q31IY9"/>
<dbReference type="STRING" id="317025.Tcr_0288"/>
<dbReference type="KEGG" id="tcx:Tcr_0288"/>
<dbReference type="eggNOG" id="COG0085">
    <property type="taxonomic scope" value="Bacteria"/>
</dbReference>
<dbReference type="HOGENOM" id="CLU_000524_4_0_6"/>
<dbReference type="OrthoDB" id="9803954at2"/>
<dbReference type="GO" id="GO:0000428">
    <property type="term" value="C:DNA-directed RNA polymerase complex"/>
    <property type="evidence" value="ECO:0007669"/>
    <property type="project" value="UniProtKB-KW"/>
</dbReference>
<dbReference type="GO" id="GO:0003677">
    <property type="term" value="F:DNA binding"/>
    <property type="evidence" value="ECO:0007669"/>
    <property type="project" value="UniProtKB-UniRule"/>
</dbReference>
<dbReference type="GO" id="GO:0003899">
    <property type="term" value="F:DNA-directed RNA polymerase activity"/>
    <property type="evidence" value="ECO:0007669"/>
    <property type="project" value="UniProtKB-UniRule"/>
</dbReference>
<dbReference type="GO" id="GO:0032549">
    <property type="term" value="F:ribonucleoside binding"/>
    <property type="evidence" value="ECO:0007669"/>
    <property type="project" value="InterPro"/>
</dbReference>
<dbReference type="GO" id="GO:0006351">
    <property type="term" value="P:DNA-templated transcription"/>
    <property type="evidence" value="ECO:0007669"/>
    <property type="project" value="UniProtKB-UniRule"/>
</dbReference>
<dbReference type="CDD" id="cd00653">
    <property type="entry name" value="RNA_pol_B_RPB2"/>
    <property type="match status" value="1"/>
</dbReference>
<dbReference type="FunFam" id="2.40.270.10:FF:000003">
    <property type="entry name" value="DNA-directed RNA polymerase subunit beta"/>
    <property type="match status" value="1"/>
</dbReference>
<dbReference type="FunFam" id="2.40.50.100:FF:000006">
    <property type="entry name" value="DNA-directed RNA polymerase subunit beta"/>
    <property type="match status" value="1"/>
</dbReference>
<dbReference type="FunFam" id="2.40.50.150:FF:000001">
    <property type="entry name" value="DNA-directed RNA polymerase subunit beta"/>
    <property type="match status" value="1"/>
</dbReference>
<dbReference type="FunFam" id="3.90.1800.10:FF:000001">
    <property type="entry name" value="DNA-directed RNA polymerase subunit beta"/>
    <property type="match status" value="1"/>
</dbReference>
<dbReference type="Gene3D" id="2.40.50.100">
    <property type="match status" value="1"/>
</dbReference>
<dbReference type="Gene3D" id="2.40.50.150">
    <property type="match status" value="1"/>
</dbReference>
<dbReference type="Gene3D" id="3.90.1100.10">
    <property type="match status" value="2"/>
</dbReference>
<dbReference type="Gene3D" id="2.30.150.10">
    <property type="entry name" value="DNA-directed RNA polymerase, beta subunit, external 1 domain"/>
    <property type="match status" value="1"/>
</dbReference>
<dbReference type="Gene3D" id="2.40.270.10">
    <property type="entry name" value="DNA-directed RNA polymerase, subunit 2, domain 6"/>
    <property type="match status" value="1"/>
</dbReference>
<dbReference type="Gene3D" id="3.90.1800.10">
    <property type="entry name" value="RNA polymerase alpha subunit dimerisation domain"/>
    <property type="match status" value="1"/>
</dbReference>
<dbReference type="Gene3D" id="3.90.1110.10">
    <property type="entry name" value="RNA polymerase Rpb2, domain 2"/>
    <property type="match status" value="1"/>
</dbReference>
<dbReference type="HAMAP" id="MF_01321">
    <property type="entry name" value="RNApol_bact_RpoB"/>
    <property type="match status" value="1"/>
</dbReference>
<dbReference type="InterPro" id="IPR042107">
    <property type="entry name" value="DNA-dir_RNA_pol_bsu_ext_1_sf"/>
</dbReference>
<dbReference type="InterPro" id="IPR019462">
    <property type="entry name" value="DNA-dir_RNA_pol_bsu_external_1"/>
</dbReference>
<dbReference type="InterPro" id="IPR015712">
    <property type="entry name" value="DNA-dir_RNA_pol_su2"/>
</dbReference>
<dbReference type="InterPro" id="IPR007120">
    <property type="entry name" value="DNA-dir_RNAP_su2_dom"/>
</dbReference>
<dbReference type="InterPro" id="IPR037033">
    <property type="entry name" value="DNA-dir_RNAP_su2_hyb_sf"/>
</dbReference>
<dbReference type="InterPro" id="IPR010243">
    <property type="entry name" value="RNA_pol_bsu_bac"/>
</dbReference>
<dbReference type="InterPro" id="IPR007121">
    <property type="entry name" value="RNA_pol_bsu_CS"/>
</dbReference>
<dbReference type="InterPro" id="IPR007644">
    <property type="entry name" value="RNA_pol_bsu_protrusion"/>
</dbReference>
<dbReference type="InterPro" id="IPR007642">
    <property type="entry name" value="RNA_pol_Rpb2_2"/>
</dbReference>
<dbReference type="InterPro" id="IPR037034">
    <property type="entry name" value="RNA_pol_Rpb2_2_sf"/>
</dbReference>
<dbReference type="InterPro" id="IPR007645">
    <property type="entry name" value="RNA_pol_Rpb2_3"/>
</dbReference>
<dbReference type="InterPro" id="IPR007641">
    <property type="entry name" value="RNA_pol_Rpb2_7"/>
</dbReference>
<dbReference type="InterPro" id="IPR014724">
    <property type="entry name" value="RNA_pol_RPB2_OB-fold"/>
</dbReference>
<dbReference type="NCBIfam" id="NF001616">
    <property type="entry name" value="PRK00405.1"/>
    <property type="match status" value="1"/>
</dbReference>
<dbReference type="NCBIfam" id="TIGR02013">
    <property type="entry name" value="rpoB"/>
    <property type="match status" value="1"/>
</dbReference>
<dbReference type="PANTHER" id="PTHR20856">
    <property type="entry name" value="DNA-DIRECTED RNA POLYMERASE I SUBUNIT 2"/>
    <property type="match status" value="1"/>
</dbReference>
<dbReference type="Pfam" id="PF04563">
    <property type="entry name" value="RNA_pol_Rpb2_1"/>
    <property type="match status" value="1"/>
</dbReference>
<dbReference type="Pfam" id="PF04561">
    <property type="entry name" value="RNA_pol_Rpb2_2"/>
    <property type="match status" value="2"/>
</dbReference>
<dbReference type="Pfam" id="PF04565">
    <property type="entry name" value="RNA_pol_Rpb2_3"/>
    <property type="match status" value="1"/>
</dbReference>
<dbReference type="Pfam" id="PF10385">
    <property type="entry name" value="RNA_pol_Rpb2_45"/>
    <property type="match status" value="1"/>
</dbReference>
<dbReference type="Pfam" id="PF00562">
    <property type="entry name" value="RNA_pol_Rpb2_6"/>
    <property type="match status" value="1"/>
</dbReference>
<dbReference type="Pfam" id="PF04560">
    <property type="entry name" value="RNA_pol_Rpb2_7"/>
    <property type="match status" value="1"/>
</dbReference>
<dbReference type="SUPFAM" id="SSF64484">
    <property type="entry name" value="beta and beta-prime subunits of DNA dependent RNA-polymerase"/>
    <property type="match status" value="1"/>
</dbReference>
<dbReference type="PROSITE" id="PS01166">
    <property type="entry name" value="RNA_POL_BETA"/>
    <property type="match status" value="1"/>
</dbReference>
<feature type="chain" id="PRO_0000237322" description="DNA-directed RNA polymerase subunit beta">
    <location>
        <begin position="1"/>
        <end position="1352"/>
    </location>
</feature>
<name>RPOB_HYDCU</name>
<comment type="function">
    <text evidence="1">DNA-dependent RNA polymerase catalyzes the transcription of DNA into RNA using the four ribonucleoside triphosphates as substrates.</text>
</comment>
<comment type="catalytic activity">
    <reaction evidence="1">
        <text>RNA(n) + a ribonucleoside 5'-triphosphate = RNA(n+1) + diphosphate</text>
        <dbReference type="Rhea" id="RHEA:21248"/>
        <dbReference type="Rhea" id="RHEA-COMP:14527"/>
        <dbReference type="Rhea" id="RHEA-COMP:17342"/>
        <dbReference type="ChEBI" id="CHEBI:33019"/>
        <dbReference type="ChEBI" id="CHEBI:61557"/>
        <dbReference type="ChEBI" id="CHEBI:140395"/>
        <dbReference type="EC" id="2.7.7.6"/>
    </reaction>
</comment>
<comment type="subunit">
    <text evidence="1">The RNAP catalytic core consists of 2 alpha, 1 beta, 1 beta' and 1 omega subunit. When a sigma factor is associated with the core the holoenzyme is formed, which can initiate transcription.</text>
</comment>
<comment type="similarity">
    <text evidence="1">Belongs to the RNA polymerase beta chain family.</text>
</comment>
<reference key="1">
    <citation type="journal article" date="2006" name="PLoS Biol.">
        <title>The genome of deep-sea vent chemolithoautotroph Thiomicrospira crunogena XCL-2.</title>
        <authorList>
            <person name="Scott K.M."/>
            <person name="Sievert S.M."/>
            <person name="Abril F.N."/>
            <person name="Ball L.A."/>
            <person name="Barrett C.J."/>
            <person name="Blake R.A."/>
            <person name="Boller A.J."/>
            <person name="Chain P.S.G."/>
            <person name="Clark J.A."/>
            <person name="Davis C.R."/>
            <person name="Detter C."/>
            <person name="Do K.F."/>
            <person name="Dobrinski K.P."/>
            <person name="Faza B.I."/>
            <person name="Fitzpatrick K.A."/>
            <person name="Freyermuth S.K."/>
            <person name="Harmer T.L."/>
            <person name="Hauser L.J."/>
            <person name="Huegler M."/>
            <person name="Kerfeld C.A."/>
            <person name="Klotz M.G."/>
            <person name="Kong W.W."/>
            <person name="Land M."/>
            <person name="Lapidus A."/>
            <person name="Larimer F.W."/>
            <person name="Longo D.L."/>
            <person name="Lucas S."/>
            <person name="Malfatti S.A."/>
            <person name="Massey S.E."/>
            <person name="Martin D.D."/>
            <person name="McCuddin Z."/>
            <person name="Meyer F."/>
            <person name="Moore J.L."/>
            <person name="Ocampo L.H. Jr."/>
            <person name="Paul J.H."/>
            <person name="Paulsen I.T."/>
            <person name="Reep D.K."/>
            <person name="Ren Q."/>
            <person name="Ross R.L."/>
            <person name="Sato P.Y."/>
            <person name="Thomas P."/>
            <person name="Tinkham L.E."/>
            <person name="Zeruth G.T."/>
        </authorList>
    </citation>
    <scope>NUCLEOTIDE SEQUENCE [LARGE SCALE GENOMIC DNA]</scope>
    <source>
        <strain>DSM 25203 / XCL-2</strain>
    </source>
</reference>
<organism>
    <name type="scientific">Hydrogenovibrio crunogenus (strain DSM 25203 / XCL-2)</name>
    <name type="common">Thiomicrospira crunogena</name>
    <dbReference type="NCBI Taxonomy" id="317025"/>
    <lineage>
        <taxon>Bacteria</taxon>
        <taxon>Pseudomonadati</taxon>
        <taxon>Pseudomonadota</taxon>
        <taxon>Gammaproteobacteria</taxon>
        <taxon>Thiotrichales</taxon>
        <taxon>Piscirickettsiaceae</taxon>
        <taxon>Hydrogenovibrio</taxon>
    </lineage>
</organism>
<proteinExistence type="inferred from homology"/>
<evidence type="ECO:0000255" key="1">
    <source>
        <dbReference type="HAMAP-Rule" id="MF_01321"/>
    </source>
</evidence>